<organism>
    <name type="scientific">Shewanella baltica (strain OS185)</name>
    <dbReference type="NCBI Taxonomy" id="402882"/>
    <lineage>
        <taxon>Bacteria</taxon>
        <taxon>Pseudomonadati</taxon>
        <taxon>Pseudomonadota</taxon>
        <taxon>Gammaproteobacteria</taxon>
        <taxon>Alteromonadales</taxon>
        <taxon>Shewanellaceae</taxon>
        <taxon>Shewanella</taxon>
    </lineage>
</organism>
<keyword id="KW-0686">Riboflavin biosynthesis</keyword>
<keyword id="KW-0808">Transferase</keyword>
<accession>A6WR47</accession>
<proteinExistence type="inferred from homology"/>
<dbReference type="EC" id="2.5.1.78" evidence="1"/>
<dbReference type="EMBL" id="CP000753">
    <property type="protein sequence ID" value="ABS09286.1"/>
    <property type="molecule type" value="Genomic_DNA"/>
</dbReference>
<dbReference type="SMR" id="A6WR47"/>
<dbReference type="KEGG" id="sbm:Shew185_3155"/>
<dbReference type="HOGENOM" id="CLU_089358_1_1_6"/>
<dbReference type="UniPathway" id="UPA00275">
    <property type="reaction ID" value="UER00404"/>
</dbReference>
<dbReference type="GO" id="GO:0005829">
    <property type="term" value="C:cytosol"/>
    <property type="evidence" value="ECO:0007669"/>
    <property type="project" value="TreeGrafter"/>
</dbReference>
<dbReference type="GO" id="GO:0009349">
    <property type="term" value="C:riboflavin synthase complex"/>
    <property type="evidence" value="ECO:0007669"/>
    <property type="project" value="InterPro"/>
</dbReference>
<dbReference type="GO" id="GO:0000906">
    <property type="term" value="F:6,7-dimethyl-8-ribityllumazine synthase activity"/>
    <property type="evidence" value="ECO:0007669"/>
    <property type="project" value="UniProtKB-UniRule"/>
</dbReference>
<dbReference type="GO" id="GO:0009231">
    <property type="term" value="P:riboflavin biosynthetic process"/>
    <property type="evidence" value="ECO:0007669"/>
    <property type="project" value="UniProtKB-UniRule"/>
</dbReference>
<dbReference type="CDD" id="cd09209">
    <property type="entry name" value="Lumazine_synthase-I"/>
    <property type="match status" value="1"/>
</dbReference>
<dbReference type="FunFam" id="3.40.50.960:FF:000001">
    <property type="entry name" value="6,7-dimethyl-8-ribityllumazine synthase"/>
    <property type="match status" value="1"/>
</dbReference>
<dbReference type="Gene3D" id="3.40.50.960">
    <property type="entry name" value="Lumazine/riboflavin synthase"/>
    <property type="match status" value="1"/>
</dbReference>
<dbReference type="HAMAP" id="MF_00178">
    <property type="entry name" value="Lumazine_synth"/>
    <property type="match status" value="1"/>
</dbReference>
<dbReference type="InterPro" id="IPR034964">
    <property type="entry name" value="LS"/>
</dbReference>
<dbReference type="InterPro" id="IPR002180">
    <property type="entry name" value="LS/RS"/>
</dbReference>
<dbReference type="InterPro" id="IPR036467">
    <property type="entry name" value="LS/RS_sf"/>
</dbReference>
<dbReference type="NCBIfam" id="TIGR00114">
    <property type="entry name" value="lumazine-synth"/>
    <property type="match status" value="1"/>
</dbReference>
<dbReference type="NCBIfam" id="NF000812">
    <property type="entry name" value="PRK00061.1-4"/>
    <property type="match status" value="1"/>
</dbReference>
<dbReference type="PANTHER" id="PTHR21058:SF0">
    <property type="entry name" value="6,7-DIMETHYL-8-RIBITYLLUMAZINE SYNTHASE"/>
    <property type="match status" value="1"/>
</dbReference>
<dbReference type="PANTHER" id="PTHR21058">
    <property type="entry name" value="6,7-DIMETHYL-8-RIBITYLLUMAZINE SYNTHASE DMRL SYNTHASE LUMAZINE SYNTHASE"/>
    <property type="match status" value="1"/>
</dbReference>
<dbReference type="Pfam" id="PF00885">
    <property type="entry name" value="DMRL_synthase"/>
    <property type="match status" value="1"/>
</dbReference>
<dbReference type="SUPFAM" id="SSF52121">
    <property type="entry name" value="Lumazine synthase"/>
    <property type="match status" value="1"/>
</dbReference>
<feature type="chain" id="PRO_1000040508" description="6,7-dimethyl-8-ribityllumazine synthase">
    <location>
        <begin position="1"/>
        <end position="159"/>
    </location>
</feature>
<feature type="active site" description="Proton donor" evidence="1">
    <location>
        <position position="89"/>
    </location>
</feature>
<feature type="binding site" evidence="1">
    <location>
        <position position="22"/>
    </location>
    <ligand>
        <name>5-amino-6-(D-ribitylamino)uracil</name>
        <dbReference type="ChEBI" id="CHEBI:15934"/>
    </ligand>
</feature>
<feature type="binding site" evidence="1">
    <location>
        <begin position="57"/>
        <end position="59"/>
    </location>
    <ligand>
        <name>5-amino-6-(D-ribitylamino)uracil</name>
        <dbReference type="ChEBI" id="CHEBI:15934"/>
    </ligand>
</feature>
<feature type="binding site" evidence="1">
    <location>
        <begin position="81"/>
        <end position="83"/>
    </location>
    <ligand>
        <name>5-amino-6-(D-ribitylamino)uracil</name>
        <dbReference type="ChEBI" id="CHEBI:15934"/>
    </ligand>
</feature>
<feature type="binding site" evidence="1">
    <location>
        <begin position="86"/>
        <end position="87"/>
    </location>
    <ligand>
        <name>(2S)-2-hydroxy-3-oxobutyl phosphate</name>
        <dbReference type="ChEBI" id="CHEBI:58830"/>
    </ligand>
</feature>
<feature type="binding site" evidence="1">
    <location>
        <position position="114"/>
    </location>
    <ligand>
        <name>5-amino-6-(D-ribitylamino)uracil</name>
        <dbReference type="ChEBI" id="CHEBI:15934"/>
    </ligand>
</feature>
<feature type="binding site" evidence="1">
    <location>
        <position position="128"/>
    </location>
    <ligand>
        <name>(2S)-2-hydroxy-3-oxobutyl phosphate</name>
        <dbReference type="ChEBI" id="CHEBI:58830"/>
    </ligand>
</feature>
<comment type="function">
    <text evidence="1">Catalyzes the formation of 6,7-dimethyl-8-ribityllumazine by condensation of 5-amino-6-(D-ribitylamino)uracil with 3,4-dihydroxy-2-butanone 4-phosphate. This is the penultimate step in the biosynthesis of riboflavin.</text>
</comment>
<comment type="catalytic activity">
    <reaction evidence="1">
        <text>(2S)-2-hydroxy-3-oxobutyl phosphate + 5-amino-6-(D-ribitylamino)uracil = 6,7-dimethyl-8-(1-D-ribityl)lumazine + phosphate + 2 H2O + H(+)</text>
        <dbReference type="Rhea" id="RHEA:26152"/>
        <dbReference type="ChEBI" id="CHEBI:15377"/>
        <dbReference type="ChEBI" id="CHEBI:15378"/>
        <dbReference type="ChEBI" id="CHEBI:15934"/>
        <dbReference type="ChEBI" id="CHEBI:43474"/>
        <dbReference type="ChEBI" id="CHEBI:58201"/>
        <dbReference type="ChEBI" id="CHEBI:58830"/>
        <dbReference type="EC" id="2.5.1.78"/>
    </reaction>
</comment>
<comment type="pathway">
    <text evidence="1">Cofactor biosynthesis; riboflavin biosynthesis; riboflavin from 2-hydroxy-3-oxobutyl phosphate and 5-amino-6-(D-ribitylamino)uracil: step 1/2.</text>
</comment>
<comment type="subunit">
    <text evidence="1">Forms an icosahedral capsid composed of 60 subunits, arranged as a dodecamer of pentamers.</text>
</comment>
<comment type="similarity">
    <text evidence="1">Belongs to the DMRL synthase family.</text>
</comment>
<protein>
    <recommendedName>
        <fullName evidence="1">6,7-dimethyl-8-ribityllumazine synthase</fullName>
        <shortName evidence="1">DMRL synthase</shortName>
        <shortName evidence="1">LS</shortName>
        <shortName evidence="1">Lumazine synthase</shortName>
        <ecNumber evidence="1">2.5.1.78</ecNumber>
    </recommendedName>
</protein>
<gene>
    <name evidence="1" type="primary">ribH</name>
    <name type="ordered locus">Shew185_3155</name>
</gene>
<name>RISB_SHEB8</name>
<evidence type="ECO:0000255" key="1">
    <source>
        <dbReference type="HAMAP-Rule" id="MF_00178"/>
    </source>
</evidence>
<reference key="1">
    <citation type="submission" date="2007-07" db="EMBL/GenBank/DDBJ databases">
        <title>Complete sequence of chromosome of Shewanella baltica OS185.</title>
        <authorList>
            <consortium name="US DOE Joint Genome Institute"/>
            <person name="Copeland A."/>
            <person name="Lucas S."/>
            <person name="Lapidus A."/>
            <person name="Barry K."/>
            <person name="Glavina del Rio T."/>
            <person name="Dalin E."/>
            <person name="Tice H."/>
            <person name="Pitluck S."/>
            <person name="Sims D."/>
            <person name="Brettin T."/>
            <person name="Bruce D."/>
            <person name="Detter J.C."/>
            <person name="Han C."/>
            <person name="Schmutz J."/>
            <person name="Larimer F."/>
            <person name="Land M."/>
            <person name="Hauser L."/>
            <person name="Kyrpides N."/>
            <person name="Mikhailova N."/>
            <person name="Brettar I."/>
            <person name="Rodrigues J."/>
            <person name="Konstantinidis K."/>
            <person name="Tiedje J."/>
            <person name="Richardson P."/>
        </authorList>
    </citation>
    <scope>NUCLEOTIDE SEQUENCE [LARGE SCALE GENOMIC DNA]</scope>
    <source>
        <strain>OS185</strain>
    </source>
</reference>
<sequence>MNVVQGNIEAKNAKVAIVISRFNSFLVESLLEGALDTLKRFGQVSDDNITVVRVPGAVELPLAARRVAASGKFDGIIALGAVIRGGTPHFDFVAGECNKGLAQVALEFDLPVAFGVLTTDTIEQAIERSGTKAGNKGGEAALSLLEMVNVLQELEQQLL</sequence>